<accession>G2X0L1</accession>
<sequence>MVSFKSLLLAASAFTAVLGRPFDSFDGPDVNITDADELLVRRQVTANSEGTHNGYFYSWWSDGGGQVTYTMGAGSRYSVTWKDTGNFVGGKGWNPGTGRTINYGGSFSPQGNGYLAVYGWTRNPLIEYYVVESYGTYNPGSGGQLKGTVTTDGGTYNVYVSTRTNQPSIDGTRTFQQYWSVRTSKRVGGAVTMQNHFNAWAQFGMNLGAHYYQIVATEGNGDFVGTEIWGLARGCRR</sequence>
<proteinExistence type="inferred from homology"/>
<name>EIX2_VERDV</name>
<protein>
    <recommendedName>
        <fullName evidence="6">Ethylene-inducing xylanase 2</fullName>
        <shortName evidence="6">EIX2</shortName>
        <ecNumber evidence="4">3.2.1.8</ecNumber>
    </recommendedName>
    <alternativeName>
        <fullName evidence="6">Endo-1,4-beta-xylanase EIX2</fullName>
    </alternativeName>
</protein>
<dbReference type="EC" id="3.2.1.8" evidence="4"/>
<dbReference type="EMBL" id="DS572700">
    <property type="protein sequence ID" value="EGY22352.1"/>
    <property type="molecule type" value="Genomic_DNA"/>
</dbReference>
<dbReference type="RefSeq" id="XP_009652169.1">
    <property type="nucleotide sequence ID" value="XM_009653874.1"/>
</dbReference>
<dbReference type="SMR" id="G2X0L1"/>
<dbReference type="STRING" id="498257.G2X0L1"/>
<dbReference type="EnsemblFungi" id="EGY22352">
    <property type="protein sequence ID" value="EGY22352"/>
    <property type="gene ID" value="VDAG_03790"/>
</dbReference>
<dbReference type="GeneID" id="20705253"/>
<dbReference type="KEGG" id="vda:VDAG_03790"/>
<dbReference type="eggNOG" id="ENOG502RXA7">
    <property type="taxonomic scope" value="Eukaryota"/>
</dbReference>
<dbReference type="HOGENOM" id="CLU_052631_0_0_1"/>
<dbReference type="InParanoid" id="G2X0L1"/>
<dbReference type="OMA" id="NMQNHFN"/>
<dbReference type="OrthoDB" id="9408at1028384"/>
<dbReference type="UniPathway" id="UPA00114"/>
<dbReference type="PHI-base" id="PHI:11924"/>
<dbReference type="Proteomes" id="UP000001611">
    <property type="component" value="Chromosome 3"/>
</dbReference>
<dbReference type="GO" id="GO:0031176">
    <property type="term" value="F:endo-1,4-beta-xylanase activity"/>
    <property type="evidence" value="ECO:0007669"/>
    <property type="project" value="UniProtKB-UniRule"/>
</dbReference>
<dbReference type="GO" id="GO:0045493">
    <property type="term" value="P:xylan catabolic process"/>
    <property type="evidence" value="ECO:0007669"/>
    <property type="project" value="UniProtKB-UniRule"/>
</dbReference>
<dbReference type="FunFam" id="2.60.120.180:FF:000001">
    <property type="entry name" value="Endo-1,4-beta-xylanase"/>
    <property type="match status" value="1"/>
</dbReference>
<dbReference type="Gene3D" id="2.60.120.180">
    <property type="match status" value="1"/>
</dbReference>
<dbReference type="InterPro" id="IPR013320">
    <property type="entry name" value="ConA-like_dom_sf"/>
</dbReference>
<dbReference type="InterPro" id="IPR013319">
    <property type="entry name" value="GH11/12"/>
</dbReference>
<dbReference type="InterPro" id="IPR018208">
    <property type="entry name" value="GH11_AS_1"/>
</dbReference>
<dbReference type="InterPro" id="IPR033123">
    <property type="entry name" value="GH11_dom"/>
</dbReference>
<dbReference type="InterPro" id="IPR001137">
    <property type="entry name" value="Glyco_hydro_11"/>
</dbReference>
<dbReference type="PANTHER" id="PTHR46828">
    <property type="entry name" value="ENDO-1,4-BETA-XYLANASE A-RELATED"/>
    <property type="match status" value="1"/>
</dbReference>
<dbReference type="PANTHER" id="PTHR46828:SF2">
    <property type="entry name" value="ENDO-1,4-BETA-XYLANASE A-RELATED"/>
    <property type="match status" value="1"/>
</dbReference>
<dbReference type="Pfam" id="PF00457">
    <property type="entry name" value="Glyco_hydro_11"/>
    <property type="match status" value="1"/>
</dbReference>
<dbReference type="PRINTS" id="PR00911">
    <property type="entry name" value="GLHYDRLASE11"/>
</dbReference>
<dbReference type="SUPFAM" id="SSF49899">
    <property type="entry name" value="Concanavalin A-like lectins/glucanases"/>
    <property type="match status" value="1"/>
</dbReference>
<dbReference type="PROSITE" id="PS00776">
    <property type="entry name" value="GH11_1"/>
    <property type="match status" value="1"/>
</dbReference>
<dbReference type="PROSITE" id="PS51761">
    <property type="entry name" value="GH11_3"/>
    <property type="match status" value="1"/>
</dbReference>
<gene>
    <name evidence="6" type="primary">EIX2</name>
    <name type="ORF">VDAG_03790</name>
</gene>
<evidence type="ECO:0000250" key="1">
    <source>
        <dbReference type="UniProtKB" id="B3VSG7"/>
    </source>
</evidence>
<evidence type="ECO:0000255" key="2"/>
<evidence type="ECO:0000255" key="3">
    <source>
        <dbReference type="PROSITE-ProRule" id="PRU00498"/>
    </source>
</evidence>
<evidence type="ECO:0000255" key="4">
    <source>
        <dbReference type="PROSITE-ProRule" id="PRU01097"/>
    </source>
</evidence>
<evidence type="ECO:0000269" key="5">
    <source>
    </source>
</evidence>
<evidence type="ECO:0000303" key="6">
    <source>
    </source>
</evidence>
<organism>
    <name type="scientific">Verticillium dahliae (strain VdLs.17 / ATCC MYA-4575 / FGSC 10137)</name>
    <name type="common">Verticillium wilt</name>
    <dbReference type="NCBI Taxonomy" id="498257"/>
    <lineage>
        <taxon>Eukaryota</taxon>
        <taxon>Fungi</taxon>
        <taxon>Dikarya</taxon>
        <taxon>Ascomycota</taxon>
        <taxon>Pezizomycotina</taxon>
        <taxon>Sordariomycetes</taxon>
        <taxon>Hypocreomycetidae</taxon>
        <taxon>Glomerellales</taxon>
        <taxon>Plectosphaerellaceae</taxon>
        <taxon>Verticillium</taxon>
    </lineage>
</organism>
<reference key="1">
    <citation type="journal article" date="2011" name="PLoS Pathog.">
        <title>Comparative genomics yields insights into niche adaptation of plant vascular wilt pathogens.</title>
        <authorList>
            <person name="Klosterman S.J."/>
            <person name="Subbarao K.V."/>
            <person name="Kang S."/>
            <person name="Veronese P."/>
            <person name="Gold S.E."/>
            <person name="Thomma B.P.H.J."/>
            <person name="Chen Z."/>
            <person name="Henrissat B."/>
            <person name="Lee Y.-H."/>
            <person name="Park J."/>
            <person name="Garcia-Pedrajas M.D."/>
            <person name="Barbara D.J."/>
            <person name="Anchieta A."/>
            <person name="de Jonge R."/>
            <person name="Santhanam P."/>
            <person name="Maruthachalam K."/>
            <person name="Atallah Z."/>
            <person name="Amyotte S.G."/>
            <person name="Paz Z."/>
            <person name="Inderbitzin P."/>
            <person name="Hayes R.J."/>
            <person name="Heiman D.I."/>
            <person name="Young S."/>
            <person name="Zeng Q."/>
            <person name="Engels R."/>
            <person name="Galagan J."/>
            <person name="Cuomo C.A."/>
            <person name="Dobinson K.F."/>
            <person name="Ma L.-J."/>
        </authorList>
    </citation>
    <scope>NUCLEOTIDE SEQUENCE [LARGE SCALE GENOMIC DNA]</scope>
    <source>
        <strain>VdLs.17 / ATCC MYA-4575 / FGSC 10137</strain>
    </source>
</reference>
<reference key="2">
    <citation type="journal article" date="2021" name="J. Integr. Plant Biol.">
        <title>Nicotiana benthamiana LRR-RLP NbEIX2 mediates the perception of an EIX-like protein from Verticillium dahliae.</title>
        <authorList>
            <person name="Yin Z."/>
            <person name="Wang N."/>
            <person name="Pi L."/>
            <person name="Li L."/>
            <person name="Duan W."/>
            <person name="Wang X."/>
            <person name="Dou D."/>
        </authorList>
    </citation>
    <scope>FUNCTION</scope>
</reference>
<keyword id="KW-0119">Carbohydrate metabolism</keyword>
<keyword id="KW-0325">Glycoprotein</keyword>
<keyword id="KW-0326">Glycosidase</keyword>
<keyword id="KW-0378">Hydrolase</keyword>
<keyword id="KW-0624">Polysaccharide degradation</keyword>
<keyword id="KW-1185">Reference proteome</keyword>
<keyword id="KW-0732">Signal</keyword>
<keyword id="KW-0858">Xylan degradation</keyword>
<comment type="function">
    <text evidence="1 5">Endo-1,4-beta-xylanase involved in the hydrolysis of xylan, a major structural heterogeneous polysaccharide found in plant biomass representing the second most abundant polysaccharide in the biosphere, after cellulose (By similarity). May act as an elicitor of plant defense responses in certain plants but does not exhibit any cell death when transiently expressed in N.benthamiana (PubMed:33205907).</text>
</comment>
<comment type="catalytic activity">
    <reaction evidence="4">
        <text>Endohydrolysis of (1-&gt;4)-beta-D-xylosidic linkages in xylans.</text>
        <dbReference type="EC" id="3.2.1.8"/>
    </reaction>
</comment>
<comment type="pathway">
    <text evidence="4">Glycan degradation; xylan degradation.</text>
</comment>
<comment type="similarity">
    <text evidence="4">Belongs to the glycosyl hydrolase 11 (cellulase G) family.</text>
</comment>
<feature type="signal peptide" evidence="2">
    <location>
        <begin position="1"/>
        <end position="19"/>
    </location>
</feature>
<feature type="chain" id="PRO_5003439194" description="Ethylene-inducing xylanase 2">
    <location>
        <begin position="20"/>
        <end position="237"/>
    </location>
</feature>
<feature type="domain" description="GH11" evidence="4">
    <location>
        <begin position="43"/>
        <end position="231"/>
    </location>
</feature>
<feature type="active site" description="Nucleophile" evidence="4">
    <location>
        <position position="127"/>
    </location>
</feature>
<feature type="active site" description="Proton donor" evidence="4">
    <location>
        <position position="218"/>
    </location>
</feature>
<feature type="glycosylation site" description="N-linked (GlcNAc...) asparagine" evidence="3">
    <location>
        <position position="31"/>
    </location>
</feature>